<protein>
    <recommendedName>
        <fullName>CCR4-NOT transcription complex subunit 10</fullName>
    </recommendedName>
</protein>
<dbReference type="EMBL" id="AK021695">
    <property type="protein sequence ID" value="BAB13876.1"/>
    <property type="status" value="ALT_INIT"/>
    <property type="molecule type" value="mRNA"/>
</dbReference>
<dbReference type="EMBL" id="AK022576">
    <property type="protein sequence ID" value="BAB14108.1"/>
    <property type="molecule type" value="mRNA"/>
</dbReference>
<dbReference type="EMBL" id="AK022952">
    <property type="protein sequence ID" value="BAB14327.1"/>
    <property type="molecule type" value="mRNA"/>
</dbReference>
<dbReference type="EMBL" id="AK023227">
    <property type="protein sequence ID" value="BAB14478.1"/>
    <property type="molecule type" value="mRNA"/>
</dbReference>
<dbReference type="EMBL" id="AK027026">
    <property type="protein sequence ID" value="BAB15629.1"/>
    <property type="molecule type" value="mRNA"/>
</dbReference>
<dbReference type="EMBL" id="AK302196">
    <property type="protein sequence ID" value="BAH13647.1"/>
    <property type="molecule type" value="mRNA"/>
</dbReference>
<dbReference type="EMBL" id="AC138972">
    <property type="status" value="NOT_ANNOTATED_CDS"/>
    <property type="molecule type" value="Genomic_DNA"/>
</dbReference>
<dbReference type="EMBL" id="AC139452">
    <property type="status" value="NOT_ANNOTATED_CDS"/>
    <property type="molecule type" value="Genomic_DNA"/>
</dbReference>
<dbReference type="EMBL" id="CH471055">
    <property type="protein sequence ID" value="EAW64435.1"/>
    <property type="molecule type" value="Genomic_DNA"/>
</dbReference>
<dbReference type="EMBL" id="BC002928">
    <property type="protein sequence ID" value="AAH02928.1"/>
    <property type="molecule type" value="mRNA"/>
</dbReference>
<dbReference type="EMBL" id="BC002931">
    <property type="protein sequence ID" value="AAH02931.1"/>
    <property type="molecule type" value="mRNA"/>
</dbReference>
<dbReference type="EMBL" id="AL117639">
    <property type="protein sequence ID" value="CAB56027.2"/>
    <property type="molecule type" value="mRNA"/>
</dbReference>
<dbReference type="CCDS" id="CCDS2655.1">
    <molecule id="Q9H9A5-1"/>
</dbReference>
<dbReference type="CCDS" id="CCDS58821.1">
    <molecule id="Q9H9A5-3"/>
</dbReference>
<dbReference type="CCDS" id="CCDS58822.1">
    <molecule id="Q9H9A5-6"/>
</dbReference>
<dbReference type="RefSeq" id="NP_001243670.1">
    <molecule id="Q9H9A5-3"/>
    <property type="nucleotide sequence ID" value="NM_001256741.2"/>
</dbReference>
<dbReference type="RefSeq" id="NP_001243671.1">
    <molecule id="Q9H9A5-6"/>
    <property type="nucleotide sequence ID" value="NM_001256742.2"/>
</dbReference>
<dbReference type="RefSeq" id="NP_056257.1">
    <molecule id="Q9H9A5-1"/>
    <property type="nucleotide sequence ID" value="NM_015442.3"/>
</dbReference>
<dbReference type="PDB" id="8BFI">
    <property type="method" value="X-ray"/>
    <property type="resolution" value="3.00 A"/>
    <property type="chains" value="B=1-714"/>
</dbReference>
<dbReference type="PDB" id="8FY3">
    <property type="method" value="EM"/>
    <property type="resolution" value="2.88 A"/>
    <property type="chains" value="B=25-707"/>
</dbReference>
<dbReference type="PDBsum" id="8BFI"/>
<dbReference type="PDBsum" id="8FY3"/>
<dbReference type="EMDB" id="EMD-29551"/>
<dbReference type="SMR" id="Q9H9A5"/>
<dbReference type="BioGRID" id="117411">
    <property type="interactions" value="150"/>
</dbReference>
<dbReference type="ComplexPortal" id="CPX-2522">
    <property type="entry name" value="CCR4-NOT mRNA deadenylase complex, CNOT6L-CNOT7 variant"/>
</dbReference>
<dbReference type="ComplexPortal" id="CPX-2535">
    <property type="entry name" value="CCR4-NOT mRNA deadenylase complex, CNOT6L-CNOT8 variant"/>
</dbReference>
<dbReference type="ComplexPortal" id="CPX-2849">
    <property type="entry name" value="CCR4-NOT mRNA deadenylase complex, CNOT6-CNOT8 variant"/>
</dbReference>
<dbReference type="ComplexPortal" id="CPX-707">
    <property type="entry name" value="CCR4-NOT mRNA deadenylase complex, CNOT6-CNOT7 variant"/>
</dbReference>
<dbReference type="CORUM" id="Q9H9A5"/>
<dbReference type="DIP" id="DIP-46839N"/>
<dbReference type="FunCoup" id="Q9H9A5">
    <property type="interactions" value="2569"/>
</dbReference>
<dbReference type="IntAct" id="Q9H9A5">
    <property type="interactions" value="78"/>
</dbReference>
<dbReference type="MINT" id="Q9H9A5"/>
<dbReference type="STRING" id="9606.ENSP00000399862"/>
<dbReference type="ChEMBL" id="CHEMBL4105878"/>
<dbReference type="GlyGen" id="Q9H9A5">
    <property type="glycosylation" value="2 sites, 1 O-linked glycan (2 sites)"/>
</dbReference>
<dbReference type="iPTMnet" id="Q9H9A5"/>
<dbReference type="PhosphoSitePlus" id="Q9H9A5"/>
<dbReference type="BioMuta" id="CNOT10"/>
<dbReference type="DMDM" id="74733982"/>
<dbReference type="jPOST" id="Q9H9A5"/>
<dbReference type="MassIVE" id="Q9H9A5"/>
<dbReference type="PaxDb" id="9606-ENSP00000399862"/>
<dbReference type="PeptideAtlas" id="Q9H9A5"/>
<dbReference type="ProteomicsDB" id="30485"/>
<dbReference type="ProteomicsDB" id="81300">
    <molecule id="Q9H9A5-1"/>
</dbReference>
<dbReference type="ProteomicsDB" id="81301">
    <molecule id="Q9H9A5-2"/>
</dbReference>
<dbReference type="ProteomicsDB" id="81302">
    <molecule id="Q9H9A5-3"/>
</dbReference>
<dbReference type="ProteomicsDB" id="81303">
    <molecule id="Q9H9A5-4"/>
</dbReference>
<dbReference type="ProteomicsDB" id="81304">
    <molecule id="Q9H9A5-5"/>
</dbReference>
<dbReference type="Pumba" id="Q9H9A5"/>
<dbReference type="Antibodypedia" id="27780">
    <property type="antibodies" value="90 antibodies from 23 providers"/>
</dbReference>
<dbReference type="DNASU" id="25904"/>
<dbReference type="Ensembl" id="ENST00000328834.10">
    <molecule id="Q9H9A5-1"/>
    <property type="protein sequence ID" value="ENSP00000330060.5"/>
    <property type="gene ID" value="ENSG00000182973.20"/>
</dbReference>
<dbReference type="Ensembl" id="ENST00000331889.10">
    <molecule id="Q9H9A5-3"/>
    <property type="protein sequence ID" value="ENSP00000329376.6"/>
    <property type="gene ID" value="ENSG00000182973.20"/>
</dbReference>
<dbReference type="Ensembl" id="ENST00000454516.7">
    <molecule id="Q9H9A5-6"/>
    <property type="protein sequence ID" value="ENSP00000399862.2"/>
    <property type="gene ID" value="ENSG00000182973.20"/>
</dbReference>
<dbReference type="Ensembl" id="ENST00000707740.1">
    <molecule id="Q9H9A5-3"/>
    <property type="protein sequence ID" value="ENSP00000516964.1"/>
    <property type="gene ID" value="ENSG00000291502.1"/>
</dbReference>
<dbReference type="Ensembl" id="ENST00000707741.1">
    <molecule id="Q9H9A5-1"/>
    <property type="protein sequence ID" value="ENSP00000516965.1"/>
    <property type="gene ID" value="ENSG00000291502.1"/>
</dbReference>
<dbReference type="Ensembl" id="ENST00000707745.1">
    <molecule id="Q9H9A5-6"/>
    <property type="protein sequence ID" value="ENSP00000516967.1"/>
    <property type="gene ID" value="ENSG00000291502.1"/>
</dbReference>
<dbReference type="GeneID" id="25904"/>
<dbReference type="KEGG" id="hsa:25904"/>
<dbReference type="MANE-Select" id="ENST00000328834.10">
    <property type="protein sequence ID" value="ENSP00000330060.5"/>
    <property type="RefSeq nucleotide sequence ID" value="NM_015442.3"/>
    <property type="RefSeq protein sequence ID" value="NP_056257.1"/>
</dbReference>
<dbReference type="UCSC" id="uc003cfc.2">
    <molecule id="Q9H9A5-1"/>
    <property type="organism name" value="human"/>
</dbReference>
<dbReference type="AGR" id="HGNC:23817"/>
<dbReference type="CTD" id="25904"/>
<dbReference type="DisGeNET" id="25904"/>
<dbReference type="GeneCards" id="CNOT10"/>
<dbReference type="HGNC" id="HGNC:23817">
    <property type="gene designation" value="CNOT10"/>
</dbReference>
<dbReference type="HPA" id="ENSG00000182973">
    <property type="expression patterns" value="Low tissue specificity"/>
</dbReference>
<dbReference type="MIM" id="620508">
    <property type="type" value="gene"/>
</dbReference>
<dbReference type="neXtProt" id="NX_Q9H9A5"/>
<dbReference type="PharmGKB" id="PA134862503"/>
<dbReference type="VEuPathDB" id="HostDB:ENSG00000182973"/>
<dbReference type="eggNOG" id="KOG2471">
    <property type="taxonomic scope" value="Eukaryota"/>
</dbReference>
<dbReference type="GeneTree" id="ENSGT00390000001827"/>
<dbReference type="HOGENOM" id="CLU_013100_0_0_1"/>
<dbReference type="InParanoid" id="Q9H9A5"/>
<dbReference type="OMA" id="PECSRMY"/>
<dbReference type="OrthoDB" id="25157at2759"/>
<dbReference type="PAN-GO" id="Q9H9A5">
    <property type="GO annotations" value="3 GO annotations based on evolutionary models"/>
</dbReference>
<dbReference type="PhylomeDB" id="Q9H9A5"/>
<dbReference type="TreeFam" id="TF323368"/>
<dbReference type="PathwayCommons" id="Q9H9A5"/>
<dbReference type="Reactome" id="R-HSA-429947">
    <property type="pathway name" value="Deadenylation of mRNA"/>
</dbReference>
<dbReference type="Reactome" id="R-HSA-6804115">
    <property type="pathway name" value="TP53 regulates transcription of additional cell cycle genes whose exact role in the p53 pathway remain uncertain"/>
</dbReference>
<dbReference type="Reactome" id="R-HSA-9820841">
    <property type="pathway name" value="M-decay: degradation of maternal mRNAs by maternally stored factors"/>
</dbReference>
<dbReference type="SignaLink" id="Q9H9A5"/>
<dbReference type="SIGNOR" id="Q9H9A5"/>
<dbReference type="BioGRID-ORCS" id="25904">
    <property type="hits" value="49 hits in 1167 CRISPR screens"/>
</dbReference>
<dbReference type="CD-CODE" id="232F8A39">
    <property type="entry name" value="P-body"/>
</dbReference>
<dbReference type="CD-CODE" id="DEE660B4">
    <property type="entry name" value="Stress granule"/>
</dbReference>
<dbReference type="ChiTaRS" id="CNOT10">
    <property type="organism name" value="human"/>
</dbReference>
<dbReference type="GenomeRNAi" id="25904"/>
<dbReference type="Pharos" id="Q9H9A5">
    <property type="development level" value="Tdark"/>
</dbReference>
<dbReference type="PRO" id="PR:Q9H9A5"/>
<dbReference type="Proteomes" id="UP000005640">
    <property type="component" value="Chromosome 3"/>
</dbReference>
<dbReference type="RNAct" id="Q9H9A5">
    <property type="molecule type" value="protein"/>
</dbReference>
<dbReference type="Bgee" id="ENSG00000182973">
    <property type="expression patterns" value="Expressed in right testis and 134 other cell types or tissues"/>
</dbReference>
<dbReference type="ExpressionAtlas" id="Q9H9A5">
    <property type="expression patterns" value="baseline and differential"/>
</dbReference>
<dbReference type="GO" id="GO:0030014">
    <property type="term" value="C:CCR4-NOT complex"/>
    <property type="evidence" value="ECO:0000314"/>
    <property type="project" value="UniProtKB"/>
</dbReference>
<dbReference type="GO" id="GO:0005829">
    <property type="term" value="C:cytosol"/>
    <property type="evidence" value="ECO:0000304"/>
    <property type="project" value="Reactome"/>
</dbReference>
<dbReference type="GO" id="GO:0016020">
    <property type="term" value="C:membrane"/>
    <property type="evidence" value="ECO:0007005"/>
    <property type="project" value="UniProtKB"/>
</dbReference>
<dbReference type="GO" id="GO:0005634">
    <property type="term" value="C:nucleus"/>
    <property type="evidence" value="ECO:0007669"/>
    <property type="project" value="UniProtKB-SubCell"/>
</dbReference>
<dbReference type="GO" id="GO:0006402">
    <property type="term" value="P:mRNA catabolic process"/>
    <property type="evidence" value="ECO:0000318"/>
    <property type="project" value="GO_Central"/>
</dbReference>
<dbReference type="GO" id="GO:0017148">
    <property type="term" value="P:negative regulation of translation"/>
    <property type="evidence" value="ECO:0000318"/>
    <property type="project" value="GO_Central"/>
</dbReference>
<dbReference type="GO" id="GO:0000289">
    <property type="term" value="P:nuclear-transcribed mRNA poly(A) tail shortening"/>
    <property type="evidence" value="ECO:0000303"/>
    <property type="project" value="ComplexPortal"/>
</dbReference>
<dbReference type="GO" id="GO:0031047">
    <property type="term" value="P:regulatory ncRNA-mediated gene silencing"/>
    <property type="evidence" value="ECO:0007669"/>
    <property type="project" value="UniProtKB-KW"/>
</dbReference>
<dbReference type="FunFam" id="1.25.40.10:FF:000092">
    <property type="entry name" value="CCR4-NOT transcription complex subunit 10 isoform X1"/>
    <property type="match status" value="1"/>
</dbReference>
<dbReference type="Gene3D" id="1.25.40.10">
    <property type="entry name" value="Tetratricopeptide repeat domain"/>
    <property type="match status" value="2"/>
</dbReference>
<dbReference type="InterPro" id="IPR039740">
    <property type="entry name" value="CNOT10"/>
</dbReference>
<dbReference type="InterPro" id="IPR011990">
    <property type="entry name" value="TPR-like_helical_dom_sf"/>
</dbReference>
<dbReference type="InterPro" id="IPR019734">
    <property type="entry name" value="TPR_rpt"/>
</dbReference>
<dbReference type="PANTHER" id="PTHR12979">
    <property type="entry name" value="CCR4-NOT TRANSCRIPTION COMPLEX SUBUNIT 10"/>
    <property type="match status" value="1"/>
</dbReference>
<dbReference type="PANTHER" id="PTHR12979:SF5">
    <property type="entry name" value="CCR4-NOT TRANSCRIPTION COMPLEX SUBUNIT 10"/>
    <property type="match status" value="1"/>
</dbReference>
<dbReference type="SMART" id="SM00028">
    <property type="entry name" value="TPR"/>
    <property type="match status" value="4"/>
</dbReference>
<dbReference type="SUPFAM" id="SSF48452">
    <property type="entry name" value="TPR-like"/>
    <property type="match status" value="3"/>
</dbReference>
<organism>
    <name type="scientific">Homo sapiens</name>
    <name type="common">Human</name>
    <dbReference type="NCBI Taxonomy" id="9606"/>
    <lineage>
        <taxon>Eukaryota</taxon>
        <taxon>Metazoa</taxon>
        <taxon>Chordata</taxon>
        <taxon>Craniata</taxon>
        <taxon>Vertebrata</taxon>
        <taxon>Euteleostomi</taxon>
        <taxon>Mammalia</taxon>
        <taxon>Eutheria</taxon>
        <taxon>Euarchontoglires</taxon>
        <taxon>Primates</taxon>
        <taxon>Haplorrhini</taxon>
        <taxon>Catarrhini</taxon>
        <taxon>Hominidae</taxon>
        <taxon>Homo</taxon>
    </lineage>
</organism>
<gene>
    <name type="primary">CNOT10</name>
</gene>
<sequence length="744" mass="82310">MAADKPADQGAEKHEGTGQSSGITDQEKELSTNAFQAFTSGNYDACLQHLACLQDINKDDYKIILNTAVAEFFKSNQTTTDNLRQTLNQLKNQVHSAVEEMDGLDDVENSMLYYNQAVILYHLRQYTEAISVGEKLYQFIEPFEEKFAQAVCFLLVDLYILTYQAEKALHLLAVLEKMISQGNNNKNGKNETGNNNNKDGSNHKAESGALIEAAKSKIHQYKVRAYIQMKSLKACKREIKSVMNTAGNSAPSLFLKSNFEYLRGNYRKAVKLLNSSNIAEHPGFMKTGECLRCMFWNNLGCIHFAMSKHNLGIFYFKKALQENDNVCAQLSAGSTDPGKKFSGRPMCTLLTNKRYELLYNCGIQLLHIGRPLAAFECLIEAVQVYHANPRLWLRLAECCIAANKGTSEQETKGLPSKKGIVQSIVGQGYHRKIVLASQSIQNTVYNDGQSSAIPVASMEFAAICLRNALLLLPEEQQDPKQENGAKNSNQLGGNTESSESSETCSSKSHDGDKFIPAPPSSPLRKQELENLKCSILACSAYVALALGDNLMALNHADKLLQQPKLSGSLKFLGHLYAAEALISLDRISDAITHLNPENVTDVSLGISSNEQDQGSDKGENEAMESSGKRAPQCYPSSVNSARTVMLFNLGSAYCLRSEYDKARKCLHQAASMIHPKEVPPEAILLAVYLELQNGNTQLALQIIKRNQLLPAVKTHSEVRKKPVFQPVHPIQPIQMPAFTTVQRK</sequence>
<name>CNO10_HUMAN</name>
<reference key="1">
    <citation type="journal article" date="2004" name="Nat. Genet.">
        <title>Complete sequencing and characterization of 21,243 full-length human cDNAs.</title>
        <authorList>
            <person name="Ota T."/>
            <person name="Suzuki Y."/>
            <person name="Nishikawa T."/>
            <person name="Otsuki T."/>
            <person name="Sugiyama T."/>
            <person name="Irie R."/>
            <person name="Wakamatsu A."/>
            <person name="Hayashi K."/>
            <person name="Sato H."/>
            <person name="Nagai K."/>
            <person name="Kimura K."/>
            <person name="Makita H."/>
            <person name="Sekine M."/>
            <person name="Obayashi M."/>
            <person name="Nishi T."/>
            <person name="Shibahara T."/>
            <person name="Tanaka T."/>
            <person name="Ishii S."/>
            <person name="Yamamoto J."/>
            <person name="Saito K."/>
            <person name="Kawai Y."/>
            <person name="Isono Y."/>
            <person name="Nakamura Y."/>
            <person name="Nagahari K."/>
            <person name="Murakami K."/>
            <person name="Yasuda T."/>
            <person name="Iwayanagi T."/>
            <person name="Wagatsuma M."/>
            <person name="Shiratori A."/>
            <person name="Sudo H."/>
            <person name="Hosoiri T."/>
            <person name="Kaku Y."/>
            <person name="Kodaira H."/>
            <person name="Kondo H."/>
            <person name="Sugawara M."/>
            <person name="Takahashi M."/>
            <person name="Kanda K."/>
            <person name="Yokoi T."/>
            <person name="Furuya T."/>
            <person name="Kikkawa E."/>
            <person name="Omura Y."/>
            <person name="Abe K."/>
            <person name="Kamihara K."/>
            <person name="Katsuta N."/>
            <person name="Sato K."/>
            <person name="Tanikawa M."/>
            <person name="Yamazaki M."/>
            <person name="Ninomiya K."/>
            <person name="Ishibashi T."/>
            <person name="Yamashita H."/>
            <person name="Murakawa K."/>
            <person name="Fujimori K."/>
            <person name="Tanai H."/>
            <person name="Kimata M."/>
            <person name="Watanabe M."/>
            <person name="Hiraoka S."/>
            <person name="Chiba Y."/>
            <person name="Ishida S."/>
            <person name="Ono Y."/>
            <person name="Takiguchi S."/>
            <person name="Watanabe S."/>
            <person name="Yosida M."/>
            <person name="Hotuta T."/>
            <person name="Kusano J."/>
            <person name="Kanehori K."/>
            <person name="Takahashi-Fujii A."/>
            <person name="Hara H."/>
            <person name="Tanase T.-O."/>
            <person name="Nomura Y."/>
            <person name="Togiya S."/>
            <person name="Komai F."/>
            <person name="Hara R."/>
            <person name="Takeuchi K."/>
            <person name="Arita M."/>
            <person name="Imose N."/>
            <person name="Musashino K."/>
            <person name="Yuuki H."/>
            <person name="Oshima A."/>
            <person name="Sasaki N."/>
            <person name="Aotsuka S."/>
            <person name="Yoshikawa Y."/>
            <person name="Matsunawa H."/>
            <person name="Ichihara T."/>
            <person name="Shiohata N."/>
            <person name="Sano S."/>
            <person name="Moriya S."/>
            <person name="Momiyama H."/>
            <person name="Satoh N."/>
            <person name="Takami S."/>
            <person name="Terashima Y."/>
            <person name="Suzuki O."/>
            <person name="Nakagawa S."/>
            <person name="Senoh A."/>
            <person name="Mizoguchi H."/>
            <person name="Goto Y."/>
            <person name="Shimizu F."/>
            <person name="Wakebe H."/>
            <person name="Hishigaki H."/>
            <person name="Watanabe T."/>
            <person name="Sugiyama A."/>
            <person name="Takemoto M."/>
            <person name="Kawakami B."/>
            <person name="Yamazaki M."/>
            <person name="Watanabe K."/>
            <person name="Kumagai A."/>
            <person name="Itakura S."/>
            <person name="Fukuzumi Y."/>
            <person name="Fujimori Y."/>
            <person name="Komiyama M."/>
            <person name="Tashiro H."/>
            <person name="Tanigami A."/>
            <person name="Fujiwara T."/>
            <person name="Ono T."/>
            <person name="Yamada K."/>
            <person name="Fujii Y."/>
            <person name="Ozaki K."/>
            <person name="Hirao M."/>
            <person name="Ohmori Y."/>
            <person name="Kawabata A."/>
            <person name="Hikiji T."/>
            <person name="Kobatake N."/>
            <person name="Inagaki H."/>
            <person name="Ikema Y."/>
            <person name="Okamoto S."/>
            <person name="Okitani R."/>
            <person name="Kawakami T."/>
            <person name="Noguchi S."/>
            <person name="Itoh T."/>
            <person name="Shigeta K."/>
            <person name="Senba T."/>
            <person name="Matsumura K."/>
            <person name="Nakajima Y."/>
            <person name="Mizuno T."/>
            <person name="Morinaga M."/>
            <person name="Sasaki M."/>
            <person name="Togashi T."/>
            <person name="Oyama M."/>
            <person name="Hata H."/>
            <person name="Watanabe M."/>
            <person name="Komatsu T."/>
            <person name="Mizushima-Sugano J."/>
            <person name="Satoh T."/>
            <person name="Shirai Y."/>
            <person name="Takahashi Y."/>
            <person name="Nakagawa K."/>
            <person name="Okumura K."/>
            <person name="Nagase T."/>
            <person name="Nomura N."/>
            <person name="Kikuchi H."/>
            <person name="Masuho Y."/>
            <person name="Yamashita R."/>
            <person name="Nakai K."/>
            <person name="Yada T."/>
            <person name="Nakamura Y."/>
            <person name="Ohara O."/>
            <person name="Isogai T."/>
            <person name="Sugano S."/>
        </authorList>
    </citation>
    <scope>NUCLEOTIDE SEQUENCE [LARGE SCALE MRNA] (ISOFORMS 1; 2; 5 AND 6)</scope>
    <scope>NUCLEOTIDE SEQUENCE [LARGE SCALE MRNA] OF 85-744 (ISOFORM 4)</scope>
    <scope>VARIANT SER-348</scope>
    <source>
        <tissue>Embryo</tissue>
        <tissue>Testis</tissue>
    </source>
</reference>
<reference key="2">
    <citation type="journal article" date="2006" name="Nature">
        <title>The DNA sequence, annotation and analysis of human chromosome 3.</title>
        <authorList>
            <person name="Muzny D.M."/>
            <person name="Scherer S.E."/>
            <person name="Kaul R."/>
            <person name="Wang J."/>
            <person name="Yu J."/>
            <person name="Sudbrak R."/>
            <person name="Buhay C.J."/>
            <person name="Chen R."/>
            <person name="Cree A."/>
            <person name="Ding Y."/>
            <person name="Dugan-Rocha S."/>
            <person name="Gill R."/>
            <person name="Gunaratne P."/>
            <person name="Harris R.A."/>
            <person name="Hawes A.C."/>
            <person name="Hernandez J."/>
            <person name="Hodgson A.V."/>
            <person name="Hume J."/>
            <person name="Jackson A."/>
            <person name="Khan Z.M."/>
            <person name="Kovar-Smith C."/>
            <person name="Lewis L.R."/>
            <person name="Lozado R.J."/>
            <person name="Metzker M.L."/>
            <person name="Milosavljevic A."/>
            <person name="Miner G.R."/>
            <person name="Morgan M.B."/>
            <person name="Nazareth L.V."/>
            <person name="Scott G."/>
            <person name="Sodergren E."/>
            <person name="Song X.-Z."/>
            <person name="Steffen D."/>
            <person name="Wei S."/>
            <person name="Wheeler D.A."/>
            <person name="Wright M.W."/>
            <person name="Worley K.C."/>
            <person name="Yuan Y."/>
            <person name="Zhang Z."/>
            <person name="Adams C.Q."/>
            <person name="Ansari-Lari M.A."/>
            <person name="Ayele M."/>
            <person name="Brown M.J."/>
            <person name="Chen G."/>
            <person name="Chen Z."/>
            <person name="Clendenning J."/>
            <person name="Clerc-Blankenburg K.P."/>
            <person name="Chen R."/>
            <person name="Chen Z."/>
            <person name="Davis C."/>
            <person name="Delgado O."/>
            <person name="Dinh H.H."/>
            <person name="Dong W."/>
            <person name="Draper H."/>
            <person name="Ernst S."/>
            <person name="Fu G."/>
            <person name="Gonzalez-Garay M.L."/>
            <person name="Garcia D.K."/>
            <person name="Gillett W."/>
            <person name="Gu J."/>
            <person name="Hao B."/>
            <person name="Haugen E."/>
            <person name="Havlak P."/>
            <person name="He X."/>
            <person name="Hennig S."/>
            <person name="Hu S."/>
            <person name="Huang W."/>
            <person name="Jackson L.R."/>
            <person name="Jacob L.S."/>
            <person name="Kelly S.H."/>
            <person name="Kube M."/>
            <person name="Levy R."/>
            <person name="Li Z."/>
            <person name="Liu B."/>
            <person name="Liu J."/>
            <person name="Liu W."/>
            <person name="Lu J."/>
            <person name="Maheshwari M."/>
            <person name="Nguyen B.-V."/>
            <person name="Okwuonu G.O."/>
            <person name="Palmeiri A."/>
            <person name="Pasternak S."/>
            <person name="Perez L.M."/>
            <person name="Phelps K.A."/>
            <person name="Plopper F.J."/>
            <person name="Qiang B."/>
            <person name="Raymond C."/>
            <person name="Rodriguez R."/>
            <person name="Saenphimmachak C."/>
            <person name="Santibanez J."/>
            <person name="Shen H."/>
            <person name="Shen Y."/>
            <person name="Subramanian S."/>
            <person name="Tabor P.E."/>
            <person name="Verduzco D."/>
            <person name="Waldron L."/>
            <person name="Wang J."/>
            <person name="Wang J."/>
            <person name="Wang Q."/>
            <person name="Williams G.A."/>
            <person name="Wong G.K.-S."/>
            <person name="Yao Z."/>
            <person name="Zhang J."/>
            <person name="Zhang X."/>
            <person name="Zhao G."/>
            <person name="Zhou J."/>
            <person name="Zhou Y."/>
            <person name="Nelson D."/>
            <person name="Lehrach H."/>
            <person name="Reinhardt R."/>
            <person name="Naylor S.L."/>
            <person name="Yang H."/>
            <person name="Olson M."/>
            <person name="Weinstock G."/>
            <person name="Gibbs R.A."/>
        </authorList>
    </citation>
    <scope>NUCLEOTIDE SEQUENCE [LARGE SCALE GENOMIC DNA]</scope>
</reference>
<reference key="3">
    <citation type="submission" date="2005-07" db="EMBL/GenBank/DDBJ databases">
        <authorList>
            <person name="Mural R.J."/>
            <person name="Istrail S."/>
            <person name="Sutton G.G."/>
            <person name="Florea L."/>
            <person name="Halpern A.L."/>
            <person name="Mobarry C.M."/>
            <person name="Lippert R."/>
            <person name="Walenz B."/>
            <person name="Shatkay H."/>
            <person name="Dew I."/>
            <person name="Miller J.R."/>
            <person name="Flanigan M.J."/>
            <person name="Edwards N.J."/>
            <person name="Bolanos R."/>
            <person name="Fasulo D."/>
            <person name="Halldorsson B.V."/>
            <person name="Hannenhalli S."/>
            <person name="Turner R."/>
            <person name="Yooseph S."/>
            <person name="Lu F."/>
            <person name="Nusskern D.R."/>
            <person name="Shue B.C."/>
            <person name="Zheng X.H."/>
            <person name="Zhong F."/>
            <person name="Delcher A.L."/>
            <person name="Huson D.H."/>
            <person name="Kravitz S.A."/>
            <person name="Mouchard L."/>
            <person name="Reinert K."/>
            <person name="Remington K.A."/>
            <person name="Clark A.G."/>
            <person name="Waterman M.S."/>
            <person name="Eichler E.E."/>
            <person name="Adams M.D."/>
            <person name="Hunkapiller M.W."/>
            <person name="Myers E.W."/>
            <person name="Venter J.C."/>
        </authorList>
    </citation>
    <scope>NUCLEOTIDE SEQUENCE [LARGE SCALE GENOMIC DNA]</scope>
</reference>
<reference key="4">
    <citation type="journal article" date="2004" name="Genome Res.">
        <title>The status, quality, and expansion of the NIH full-length cDNA project: the Mammalian Gene Collection (MGC).</title>
        <authorList>
            <consortium name="The MGC Project Team"/>
        </authorList>
    </citation>
    <scope>NUCLEOTIDE SEQUENCE [LARGE SCALE MRNA] (ISOFORMS 1 AND 3)</scope>
    <scope>VARIANT SER-736</scope>
    <source>
        <tissue>Skin</tissue>
    </source>
</reference>
<reference key="5">
    <citation type="journal article" date="2007" name="BMC Genomics">
        <title>The full-ORF clone resource of the German cDNA consortium.</title>
        <authorList>
            <person name="Bechtel S."/>
            <person name="Rosenfelder H."/>
            <person name="Duda A."/>
            <person name="Schmidt C.P."/>
            <person name="Ernst U."/>
            <person name="Wellenreuther R."/>
            <person name="Mehrle A."/>
            <person name="Schuster C."/>
            <person name="Bahr A."/>
            <person name="Bloecker H."/>
            <person name="Heubner D."/>
            <person name="Hoerlein A."/>
            <person name="Michel G."/>
            <person name="Wedler H."/>
            <person name="Koehrer K."/>
            <person name="Ottenwaelder B."/>
            <person name="Poustka A."/>
            <person name="Wiemann S."/>
            <person name="Schupp I."/>
        </authorList>
    </citation>
    <scope>NUCLEOTIDE SEQUENCE [LARGE SCALE MRNA] OF 482-744 (ISOFORM 1)</scope>
    <source>
        <tissue>Testis</tissue>
    </source>
</reference>
<reference key="6">
    <citation type="journal article" date="2009" name="Anal. Chem.">
        <title>Lys-N and trypsin cover complementary parts of the phosphoproteome in a refined SCX-based approach.</title>
        <authorList>
            <person name="Gauci S."/>
            <person name="Helbig A.O."/>
            <person name="Slijper M."/>
            <person name="Krijgsveld J."/>
            <person name="Heck A.J."/>
            <person name="Mohammed S."/>
        </authorList>
    </citation>
    <scope>ACETYLATION [LARGE SCALE ANALYSIS] AT ALA-2</scope>
    <scope>CLEAVAGE OF INITIATOR METHIONINE [LARGE SCALE ANALYSIS]</scope>
    <scope>IDENTIFICATION BY MASS SPECTROMETRY [LARGE SCALE ANALYSIS]</scope>
</reference>
<reference key="7">
    <citation type="journal article" date="2009" name="Biochem. J.">
        <title>Human Ccr4-Not complexes contain variable deadenylase subunits.</title>
        <authorList>
            <person name="Lau N.C."/>
            <person name="Kolkman A."/>
            <person name="van Schaik F.M."/>
            <person name="Mulder K.W."/>
            <person name="Pijnappel W.W."/>
            <person name="Heck A.J."/>
            <person name="Timmers H.T."/>
        </authorList>
    </citation>
    <scope>IDENTIFICATION IN THE CCR4-NOT COMPLEX</scope>
    <scope>COMPOSITION OF THE CCR4-NOT COMPLEX</scope>
</reference>
<reference key="8">
    <citation type="journal article" date="2011" name="BMC Syst. Biol.">
        <title>Initial characterization of the human central proteome.</title>
        <authorList>
            <person name="Burkard T.R."/>
            <person name="Planyavsky M."/>
            <person name="Kaupe I."/>
            <person name="Breitwieser F.P."/>
            <person name="Buerckstuemmer T."/>
            <person name="Bennett K.L."/>
            <person name="Superti-Furga G."/>
            <person name="Colinge J."/>
        </authorList>
    </citation>
    <scope>IDENTIFICATION BY MASS SPECTROMETRY [LARGE SCALE ANALYSIS]</scope>
</reference>
<reference key="9">
    <citation type="journal article" date="2013" name="RNA Biol.">
        <title>C2ORF29/CNOT11 and CNOT10 form a new module of the CCR4-NOT complex.</title>
        <authorList>
            <person name="Mauxion F."/>
            <person name="Preve B."/>
            <person name="Seraphin B."/>
        </authorList>
    </citation>
    <scope>IDENTIFICATION IN THE CCR4-NOT COMPLEX</scope>
</reference>
<reference key="10">
    <citation type="journal article" date="2013" name="Nucleic Acids Res.">
        <title>Trypanosome CNOT10 is essential for the integrity of the NOT deadenylase complex and for degradation of many mRNAs.</title>
        <authorList>
            <person name="Farber V."/>
            <person name="Erben E."/>
            <person name="Sharma S."/>
            <person name="Stoecklin G."/>
            <person name="Clayton C."/>
        </authorList>
    </citation>
    <scope>FUNCTION</scope>
</reference>
<reference key="11">
    <citation type="journal article" date="2013" name="RNA Biol.">
        <title>NOT10 and C2orf29/NOT11 form a conserved module of the CCR4-NOT complex that docks onto the NOT1 N-terminal domain.</title>
        <authorList>
            <person name="Bawankar P."/>
            <person name="Loh B."/>
            <person name="Wohlbold L."/>
            <person name="Schmidt S."/>
            <person name="Izaurralde E."/>
        </authorList>
    </citation>
    <scope>INTERACTION WITH CNOT11</scope>
</reference>
<reference key="12">
    <citation type="journal article" date="2014" name="J. Proteomics">
        <title>An enzyme assisted RP-RPLC approach for in-depth analysis of human liver phosphoproteome.</title>
        <authorList>
            <person name="Bian Y."/>
            <person name="Song C."/>
            <person name="Cheng K."/>
            <person name="Dong M."/>
            <person name="Wang F."/>
            <person name="Huang J."/>
            <person name="Sun D."/>
            <person name="Wang L."/>
            <person name="Ye M."/>
            <person name="Zou H."/>
        </authorList>
    </citation>
    <scope>IDENTIFICATION BY MASS SPECTROMETRY [LARGE SCALE ANALYSIS]</scope>
    <source>
        <tissue>Liver</tissue>
    </source>
</reference>
<accession>Q9H9A5</accession>
<accession>B7Z7L1</accession>
<accession>F8WAF2</accession>
<accession>Q9BU30</accession>
<accession>Q9H5J7</accession>
<accession>Q9H8X1</accession>
<accession>Q9H9W0</accession>
<accession>Q9HAH3</accession>
<accession>Q9UFJ2</accession>
<keyword id="KW-0002">3D-structure</keyword>
<keyword id="KW-0007">Acetylation</keyword>
<keyword id="KW-0025">Alternative splicing</keyword>
<keyword id="KW-0175">Coiled coil</keyword>
<keyword id="KW-0963">Cytoplasm</keyword>
<keyword id="KW-0539">Nucleus</keyword>
<keyword id="KW-1267">Proteomics identification</keyword>
<keyword id="KW-1185">Reference proteome</keyword>
<keyword id="KW-0943">RNA-mediated gene silencing</keyword>
<keyword id="KW-0804">Transcription</keyword>
<keyword id="KW-0805">Transcription regulation</keyword>
<keyword id="KW-0810">Translation regulation</keyword>
<comment type="function">
    <text evidence="6">Component of the CCR4-NOT complex which is one of the major cellular mRNA deadenylases and is linked to various cellular processes including bulk mRNA degradation, miRNA-mediated repression, translational repression during translational initiation and general transcription regulation. Additional complex functions may be a consequence of its influence on mRNA expression. Is not required for association of CNOT7 to the CCR4-NOT complex.</text>
</comment>
<comment type="subunit">
    <text evidence="5 7">Component of the CCR4-NOT complex; distinct complexes seem to exist that differ in the participation of probably mutually exclusive catalytic subunits. CNOT10 and CNOT11 form a subcomplex docked to the CNOT1 scaffold.</text>
</comment>
<comment type="interaction">
    <interactant intactId="EBI-1054261">
        <id>Q9H9A5</id>
    </interactant>
    <interactant intactId="EBI-2562014">
        <id>Q9UKZ1</id>
        <label>CNOT11</label>
    </interactant>
    <organismsDiffer>false</organismsDiffer>
    <experiments>6</experiments>
</comment>
<comment type="interaction">
    <interactant intactId="EBI-1054261">
        <id>Q9H9A5</id>
    </interactant>
    <interactant intactId="EBI-2104530">
        <id>Q9ULM6</id>
        <label>CNOT6</label>
    </interactant>
    <organismsDiffer>false</organismsDiffer>
    <experiments>3</experiments>
</comment>
<comment type="interaction">
    <interactant intactId="EBI-1054261">
        <id>Q9H9A5</id>
    </interactant>
    <interactant intactId="EBI-1046635">
        <id>Q96LI5</id>
        <label>CNOT6L</label>
    </interactant>
    <organismsDiffer>false</organismsDiffer>
    <experiments>3</experiments>
</comment>
<comment type="interaction">
    <interactant intactId="EBI-1054261">
        <id>Q9H9A5</id>
    </interactant>
    <interactant intactId="EBI-466029">
        <id>P42858</id>
        <label>HTT</label>
    </interactant>
    <organismsDiffer>false</organismsDiffer>
    <experiments>4</experiments>
</comment>
<comment type="interaction">
    <interactant intactId="EBI-1054261">
        <id>Q9H9A5</id>
    </interactant>
    <interactant intactId="EBI-2105155">
        <id>Q8IY67</id>
        <label>RAVER1</label>
    </interactant>
    <organismsDiffer>false</organismsDiffer>
    <experiments>3</experiments>
</comment>
<comment type="interaction">
    <interactant intactId="EBI-1054261">
        <id>Q9H9A5</id>
    </interactant>
    <interactant intactId="EBI-6507625">
        <id>Q9HCJ0</id>
        <label>TNRC6C</label>
    </interactant>
    <organismsDiffer>false</organismsDiffer>
    <experiments>4</experiments>
</comment>
<comment type="interaction">
    <interactant intactId="EBI-1054261">
        <id>Q9H9A5</id>
    </interactant>
    <interactant intactId="EBI-723281">
        <id>P50616</id>
        <label>TOB1</label>
    </interactant>
    <organismsDiffer>false</organismsDiffer>
    <experiments>3</experiments>
</comment>
<comment type="interaction">
    <interactant intactId="EBI-25957177">
        <id>Q9H9A5-3</id>
    </interactant>
    <interactant intactId="EBI-466029">
        <id>P42858</id>
        <label>HTT</label>
    </interactant>
    <organismsDiffer>false</organismsDiffer>
    <experiments>3</experiments>
</comment>
<comment type="subcellular location">
    <subcellularLocation>
        <location evidence="10">Cytoplasm</location>
    </subcellularLocation>
    <subcellularLocation>
        <location evidence="10">Nucleus</location>
    </subcellularLocation>
</comment>
<comment type="alternative products">
    <event type="alternative splicing"/>
    <isoform>
        <id>Q9H9A5-1</id>
        <name>1</name>
        <sequence type="displayed"/>
    </isoform>
    <isoform>
        <id>Q9H9A5-2</id>
        <name>2</name>
        <sequence type="described" ref="VSP_030312"/>
    </isoform>
    <isoform>
        <id>Q9H9A5-3</id>
        <name>3</name>
        <sequence type="described" ref="VSP_030313"/>
    </isoform>
    <isoform>
        <id>Q9H9A5-4</id>
        <name>4</name>
        <sequence type="described" ref="VSP_030313 VSP_030314"/>
    </isoform>
    <isoform>
        <id>Q9H9A5-5</id>
        <name>5</name>
        <sequence type="described" ref="VSP_030311"/>
    </isoform>
    <isoform>
        <id>Q9H9A5-6</id>
        <name>6</name>
        <sequence type="described" ref="VSP_045557"/>
    </isoform>
</comment>
<comment type="similarity">
    <text evidence="10">Belongs to the CNOT10 family.</text>
</comment>
<comment type="sequence caution" evidence="10">
    <conflict type="erroneous initiation">
        <sequence resource="EMBL-CDS" id="BAB13876"/>
    </conflict>
</comment>
<evidence type="ECO:0000255" key="1"/>
<evidence type="ECO:0000256" key="2">
    <source>
        <dbReference type="SAM" id="MobiDB-lite"/>
    </source>
</evidence>
<evidence type="ECO:0000269" key="3">
    <source>
    </source>
</evidence>
<evidence type="ECO:0000269" key="4">
    <source>
    </source>
</evidence>
<evidence type="ECO:0000269" key="5">
    <source>
    </source>
</evidence>
<evidence type="ECO:0000269" key="6">
    <source>
    </source>
</evidence>
<evidence type="ECO:0000269" key="7">
    <source>
    </source>
</evidence>
<evidence type="ECO:0000303" key="8">
    <source>
    </source>
</evidence>
<evidence type="ECO:0000303" key="9">
    <source>
    </source>
</evidence>
<evidence type="ECO:0000305" key="10"/>
<evidence type="ECO:0007744" key="11">
    <source>
    </source>
</evidence>
<evidence type="ECO:0007829" key="12">
    <source>
        <dbReference type="PDB" id="8BFI"/>
    </source>
</evidence>
<evidence type="ECO:0007829" key="13">
    <source>
        <dbReference type="PDB" id="8FY3"/>
    </source>
</evidence>
<feature type="initiator methionine" description="Removed" evidence="11">
    <location>
        <position position="1"/>
    </location>
</feature>
<feature type="chain" id="PRO_0000314579" description="CCR4-NOT transcription complex subunit 10">
    <location>
        <begin position="2"/>
        <end position="744"/>
    </location>
</feature>
<feature type="region of interest" description="Disordered" evidence="2">
    <location>
        <begin position="1"/>
        <end position="25"/>
    </location>
</feature>
<feature type="region of interest" description="Disordered" evidence="2">
    <location>
        <begin position="183"/>
        <end position="204"/>
    </location>
</feature>
<feature type="region of interest" description="Disordered" evidence="2">
    <location>
        <begin position="477"/>
        <end position="521"/>
    </location>
</feature>
<feature type="region of interest" description="Disordered" evidence="2">
    <location>
        <begin position="602"/>
        <end position="634"/>
    </location>
</feature>
<feature type="coiled-coil region" evidence="1">
    <location>
        <begin position="74"/>
        <end position="107"/>
    </location>
</feature>
<feature type="compositionally biased region" description="Basic and acidic residues" evidence="2">
    <location>
        <begin position="1"/>
        <end position="16"/>
    </location>
</feature>
<feature type="compositionally biased region" description="Low complexity" evidence="2">
    <location>
        <begin position="183"/>
        <end position="199"/>
    </location>
</feature>
<feature type="compositionally biased region" description="Polar residues" evidence="2">
    <location>
        <begin position="484"/>
        <end position="495"/>
    </location>
</feature>
<feature type="compositionally biased region" description="Low complexity" evidence="2">
    <location>
        <begin position="496"/>
        <end position="506"/>
    </location>
</feature>
<feature type="compositionally biased region" description="Polar residues" evidence="2">
    <location>
        <begin position="602"/>
        <end position="612"/>
    </location>
</feature>
<feature type="modified residue" description="N-acetylalanine" evidence="11">
    <location>
        <position position="2"/>
    </location>
</feature>
<feature type="splice variant" id="VSP_030311" description="In isoform 5." evidence="8">
    <location>
        <begin position="1"/>
        <end position="293"/>
    </location>
</feature>
<feature type="splice variant" id="VSP_045557" description="In isoform 6." evidence="8">
    <original>MAADKPA</original>
    <variation>MKSIGVKTVKVCGSKSSVRIEGQPCSLGQSRRKVKLMGERSYTLSIGNGDYFWANKEMLWDYVQTLS</variation>
    <location>
        <begin position="1"/>
        <end position="7"/>
    </location>
</feature>
<feature type="splice variant" id="VSP_030312" description="In isoform 2." evidence="8">
    <location>
        <position position="144"/>
    </location>
</feature>
<feature type="splice variant" id="VSP_030313" description="In isoform 3 and isoform 4." evidence="8 9">
    <original>SSKSHDGDKFIPAPPSSPLRKQELENLK</original>
    <variation>R</variation>
    <location>
        <begin position="505"/>
        <end position="532"/>
    </location>
</feature>
<feature type="splice variant" id="VSP_030314" description="In isoform 4." evidence="8">
    <location>
        <begin position="556"/>
        <end position="577"/>
    </location>
</feature>
<feature type="sequence variant" id="VAR_053982" description="In dbSNP:rs11558687." evidence="3">
    <original>T</original>
    <variation>S</variation>
    <location>
        <position position="348"/>
    </location>
</feature>
<feature type="sequence variant" id="VAR_037957" description="In dbSNP:rs17849684." evidence="4">
    <original>P</original>
    <variation>S</variation>
    <location>
        <position position="736"/>
    </location>
</feature>
<feature type="sequence conflict" description="In Ref. 1; BAB14108." evidence="10" ref="1">
    <original>K</original>
    <variation>R</variation>
    <location>
        <position position="5"/>
    </location>
</feature>
<feature type="sequence conflict" description="In Ref. 1; BAB14478." evidence="10" ref="1">
    <original>C</original>
    <variation>R</variation>
    <location>
        <position position="52"/>
    </location>
</feature>
<feature type="sequence conflict" description="In Ref. 1; BAB13876." evidence="10" ref="1">
    <original>V</original>
    <variation>M</variation>
    <location>
        <position position="270"/>
    </location>
</feature>
<feature type="sequence conflict" description="In Ref. 1; BAB14108." evidence="10" ref="1">
    <original>D</original>
    <variation>G</variation>
    <location>
        <position position="478"/>
    </location>
</feature>
<feature type="sequence conflict" description="In Ref. 1; BAB14108." evidence="10" ref="1">
    <original>H</original>
    <variation>Y</variation>
    <location>
        <position position="509"/>
    </location>
</feature>
<feature type="sequence conflict" description="In Ref. 1; BAH13647." evidence="10" ref="1">
    <original>P</original>
    <variation>L</variation>
    <location>
        <position position="518"/>
    </location>
</feature>
<feature type="sequence conflict" description="In Ref. 1; BAB14478." evidence="10" ref="1">
    <original>A</original>
    <variation>T</variation>
    <location>
        <position position="622"/>
    </location>
</feature>
<feature type="helix" evidence="13">
    <location>
        <begin position="26"/>
        <end position="38"/>
    </location>
</feature>
<feature type="turn" evidence="13">
    <location>
        <begin position="39"/>
        <end position="41"/>
    </location>
</feature>
<feature type="turn" evidence="13">
    <location>
        <begin position="43"/>
        <end position="45"/>
    </location>
</feature>
<feature type="helix" evidence="13">
    <location>
        <begin position="46"/>
        <end position="56"/>
    </location>
</feature>
<feature type="turn" evidence="12">
    <location>
        <begin position="57"/>
        <end position="59"/>
    </location>
</feature>
<feature type="helix" evidence="13">
    <location>
        <begin position="61"/>
        <end position="74"/>
    </location>
</feature>
<feature type="turn" evidence="12">
    <location>
        <begin position="75"/>
        <end position="77"/>
    </location>
</feature>
<feature type="helix" evidence="13">
    <location>
        <begin position="80"/>
        <end position="95"/>
    </location>
</feature>
<feature type="helix" evidence="13">
    <location>
        <begin position="110"/>
        <end position="122"/>
    </location>
</feature>
<feature type="helix" evidence="13">
    <location>
        <begin position="126"/>
        <end position="137"/>
    </location>
</feature>
<feature type="strand" evidence="12">
    <location>
        <begin position="141"/>
        <end position="143"/>
    </location>
</feature>
<feature type="helix" evidence="13">
    <location>
        <begin position="145"/>
        <end position="161"/>
    </location>
</feature>
<feature type="helix" evidence="13">
    <location>
        <begin position="165"/>
        <end position="180"/>
    </location>
</feature>
<feature type="helix" evidence="13">
    <location>
        <begin position="208"/>
        <end position="229"/>
    </location>
</feature>
<feature type="helix" evidence="13">
    <location>
        <begin position="232"/>
        <end position="239"/>
    </location>
</feature>
<feature type="turn" evidence="13">
    <location>
        <begin position="240"/>
        <end position="243"/>
    </location>
</feature>
<feature type="helix" evidence="13">
    <location>
        <begin position="250"/>
        <end position="263"/>
    </location>
</feature>
<feature type="helix" evidence="13">
    <location>
        <begin position="266"/>
        <end position="275"/>
    </location>
</feature>
<feature type="turn" evidence="13">
    <location>
        <begin position="278"/>
        <end position="280"/>
    </location>
</feature>
<feature type="helix" evidence="13">
    <location>
        <begin position="284"/>
        <end position="287"/>
    </location>
</feature>
<feature type="helix" evidence="13">
    <location>
        <begin position="291"/>
        <end position="305"/>
    </location>
</feature>
<feature type="helix" evidence="13">
    <location>
        <begin position="309"/>
        <end position="330"/>
    </location>
</feature>
<feature type="strand" evidence="13">
    <location>
        <begin position="337"/>
        <end position="339"/>
    </location>
</feature>
<feature type="strand" evidence="13">
    <location>
        <begin position="342"/>
        <end position="344"/>
    </location>
</feature>
<feature type="helix" evidence="13">
    <location>
        <begin position="347"/>
        <end position="350"/>
    </location>
</feature>
<feature type="helix" evidence="13">
    <location>
        <begin position="354"/>
        <end position="368"/>
    </location>
</feature>
<feature type="helix" evidence="13">
    <location>
        <begin position="371"/>
        <end position="381"/>
    </location>
</feature>
<feature type="turn" evidence="13">
    <location>
        <begin position="382"/>
        <end position="384"/>
    </location>
</feature>
<feature type="helix" evidence="13">
    <location>
        <begin position="389"/>
        <end position="402"/>
    </location>
</feature>
<feature type="strand" evidence="12">
    <location>
        <begin position="433"/>
        <end position="435"/>
    </location>
</feature>
<feature type="helix" evidence="12">
    <location>
        <begin position="444"/>
        <end position="447"/>
    </location>
</feature>
<feature type="helix" evidence="13">
    <location>
        <begin position="458"/>
        <end position="471"/>
    </location>
</feature>
<feature type="helix" evidence="13">
    <location>
        <begin position="525"/>
        <end position="546"/>
    </location>
</feature>
<feature type="helix" evidence="13">
    <location>
        <begin position="549"/>
        <end position="560"/>
    </location>
</feature>
<feature type="helix" evidence="13">
    <location>
        <begin position="567"/>
        <end position="583"/>
    </location>
</feature>
<feature type="helix" evidence="13">
    <location>
        <begin position="587"/>
        <end position="593"/>
    </location>
</feature>
<feature type="helix" evidence="13">
    <location>
        <begin position="596"/>
        <end position="598"/>
    </location>
</feature>
<feature type="helix" evidence="13">
    <location>
        <begin position="638"/>
        <end position="655"/>
    </location>
</feature>
<feature type="helix" evidence="13">
    <location>
        <begin position="659"/>
        <end position="671"/>
    </location>
</feature>
<feature type="helix" evidence="12">
    <location>
        <begin position="675"/>
        <end position="677"/>
    </location>
</feature>
<feature type="helix" evidence="13">
    <location>
        <begin position="680"/>
        <end position="691"/>
    </location>
</feature>
<feature type="helix" evidence="12">
    <location>
        <begin position="696"/>
        <end position="705"/>
    </location>
</feature>
<feature type="turn" evidence="12">
    <location>
        <begin position="710"/>
        <end position="712"/>
    </location>
</feature>
<proteinExistence type="evidence at protein level"/>